<sequence>MDRQKEFVLRTLEERDIRFVRLWFTDVLGFLKSVAIAPAELEGAFEEGIGFDGSSIEGFARVSESDTVAHPDPSTFQVLPWATSSGHHHSARMFCDITMPDGSPSWADPRHVLRRQLTKAGELGFSCYVHPEIEFFLLKPGPEDGSVPVPVDNAGYFDQAVHDSALNFRRHAIDALEFMGISVEFSHHEGAPGQQEIDLRFADALSMADNVMTFRYVIKEVALEEGARASFMPKPFGQHPGSAMHTHMSLFEGDVNAFHSADDPLQLSEVGKSFIAGILEHACEISAVTNQWVNSYKRLVQGGEAPTAASWGAANRSALVRVPMYTPHKTSSRRVEVRSPDSACNPYLTFAVLLAAGLRGVEKGYVLGPQAEDNVWDLTPEERRAMGYRELPSSLDSALRAMEASELVAEALGEHVFDFFLRNKRTEWANYRSHVTPYELRTYLSL</sequence>
<gene>
    <name evidence="2" type="primary">glnA2</name>
    <name type="ordered locus">MT2280</name>
</gene>
<dbReference type="EC" id="6.3.1.2" evidence="2"/>
<dbReference type="EMBL" id="AE000516">
    <property type="protein sequence ID" value="AAK46565.1"/>
    <property type="molecule type" value="Genomic_DNA"/>
</dbReference>
<dbReference type="PIR" id="B70776">
    <property type="entry name" value="B70776"/>
</dbReference>
<dbReference type="RefSeq" id="WP_003411482.1">
    <property type="nucleotide sequence ID" value="NZ_KK341227.1"/>
</dbReference>
<dbReference type="SMR" id="P9WN36"/>
<dbReference type="KEGG" id="mtc:MT2280"/>
<dbReference type="PATRIC" id="fig|83331.31.peg.2454"/>
<dbReference type="HOGENOM" id="CLU_017290_1_3_11"/>
<dbReference type="Proteomes" id="UP000001020">
    <property type="component" value="Chromosome"/>
</dbReference>
<dbReference type="GO" id="GO:0005737">
    <property type="term" value="C:cytoplasm"/>
    <property type="evidence" value="ECO:0007669"/>
    <property type="project" value="UniProtKB-SubCell"/>
</dbReference>
<dbReference type="GO" id="GO:0005524">
    <property type="term" value="F:ATP binding"/>
    <property type="evidence" value="ECO:0007669"/>
    <property type="project" value="UniProtKB-KW"/>
</dbReference>
<dbReference type="GO" id="GO:0004356">
    <property type="term" value="F:glutamine synthetase activity"/>
    <property type="evidence" value="ECO:0007669"/>
    <property type="project" value="UniProtKB-EC"/>
</dbReference>
<dbReference type="GO" id="GO:0046872">
    <property type="term" value="F:metal ion binding"/>
    <property type="evidence" value="ECO:0007669"/>
    <property type="project" value="UniProtKB-KW"/>
</dbReference>
<dbReference type="GO" id="GO:0006542">
    <property type="term" value="P:glutamine biosynthetic process"/>
    <property type="evidence" value="ECO:0007669"/>
    <property type="project" value="InterPro"/>
</dbReference>
<dbReference type="FunFam" id="3.30.590.10:FF:000003">
    <property type="entry name" value="Glutamine synthetase 2"/>
    <property type="match status" value="1"/>
</dbReference>
<dbReference type="FunFam" id="3.10.20.70:FF:000002">
    <property type="entry name" value="Glutamine synthetase I"/>
    <property type="match status" value="1"/>
</dbReference>
<dbReference type="Gene3D" id="3.10.20.70">
    <property type="entry name" value="Glutamine synthetase, N-terminal domain"/>
    <property type="match status" value="1"/>
</dbReference>
<dbReference type="Gene3D" id="3.30.590.10">
    <property type="entry name" value="Glutamine synthetase/guanido kinase, catalytic domain"/>
    <property type="match status" value="1"/>
</dbReference>
<dbReference type="InterPro" id="IPR008147">
    <property type="entry name" value="Gln_synt_N"/>
</dbReference>
<dbReference type="InterPro" id="IPR036651">
    <property type="entry name" value="Gln_synt_N_sf"/>
</dbReference>
<dbReference type="InterPro" id="IPR014746">
    <property type="entry name" value="Gln_synth/guanido_kin_cat_dom"/>
</dbReference>
<dbReference type="InterPro" id="IPR008146">
    <property type="entry name" value="Gln_synth_cat_dom"/>
</dbReference>
<dbReference type="InterPro" id="IPR027303">
    <property type="entry name" value="Gln_synth_gly_rich_site"/>
</dbReference>
<dbReference type="PANTHER" id="PTHR43785:SF11">
    <property type="entry name" value="GAMMA-GLUTAMYLPOLYAMINE SYNTHETASE GLNA2"/>
    <property type="match status" value="1"/>
</dbReference>
<dbReference type="PANTHER" id="PTHR43785">
    <property type="entry name" value="GAMMA-GLUTAMYLPUTRESCINE SYNTHETASE"/>
    <property type="match status" value="1"/>
</dbReference>
<dbReference type="Pfam" id="PF00120">
    <property type="entry name" value="Gln-synt_C"/>
    <property type="match status" value="1"/>
</dbReference>
<dbReference type="Pfam" id="PF03951">
    <property type="entry name" value="Gln-synt_N"/>
    <property type="match status" value="1"/>
</dbReference>
<dbReference type="SMART" id="SM01230">
    <property type="entry name" value="Gln-synt_C"/>
    <property type="match status" value="1"/>
</dbReference>
<dbReference type="SUPFAM" id="SSF54368">
    <property type="entry name" value="Glutamine synthetase, N-terminal domain"/>
    <property type="match status" value="1"/>
</dbReference>
<dbReference type="SUPFAM" id="SSF55931">
    <property type="entry name" value="Glutamine synthetase/guanido kinase"/>
    <property type="match status" value="1"/>
</dbReference>
<dbReference type="PROSITE" id="PS00181">
    <property type="entry name" value="GLNA_ATP"/>
    <property type="match status" value="1"/>
</dbReference>
<dbReference type="PROSITE" id="PS51986">
    <property type="entry name" value="GS_BETA_GRASP"/>
    <property type="match status" value="1"/>
</dbReference>
<dbReference type="PROSITE" id="PS51987">
    <property type="entry name" value="GS_CATALYTIC"/>
    <property type="match status" value="1"/>
</dbReference>
<feature type="chain" id="PRO_0000427195" description="Glutamine synthetase">
    <location>
        <begin position="1"/>
        <end position="446"/>
    </location>
</feature>
<feature type="domain" description="GS beta-grasp" evidence="5">
    <location>
        <begin position="15"/>
        <end position="102"/>
    </location>
</feature>
<feature type="domain" description="GS catalytic" evidence="6">
    <location>
        <begin position="109"/>
        <end position="446"/>
    </location>
</feature>
<feature type="binding site" evidence="2">
    <location>
        <position position="132"/>
    </location>
    <ligand>
        <name>Mg(2+)</name>
        <dbReference type="ChEBI" id="CHEBI:18420"/>
        <label>1</label>
    </ligand>
</feature>
<feature type="binding site" evidence="2">
    <location>
        <position position="134"/>
    </location>
    <ligand>
        <name>Mg(2+)</name>
        <dbReference type="ChEBI" id="CHEBI:18420"/>
        <label>2</label>
    </ligand>
</feature>
<feature type="binding site" evidence="4">
    <location>
        <position position="184"/>
    </location>
    <ligand>
        <name>ATP</name>
        <dbReference type="ChEBI" id="CHEBI:30616"/>
    </ligand>
</feature>
<feature type="binding site" evidence="2">
    <location>
        <position position="189"/>
    </location>
    <ligand>
        <name>Mg(2+)</name>
        <dbReference type="ChEBI" id="CHEBI:18420"/>
        <label>2</label>
    </ligand>
</feature>
<feature type="binding site" evidence="2">
    <location>
        <position position="196"/>
    </location>
    <ligand>
        <name>Mg(2+)</name>
        <dbReference type="ChEBI" id="CHEBI:18420"/>
        <label>2</label>
    </ligand>
</feature>
<feature type="binding site" evidence="2">
    <location>
        <position position="241"/>
    </location>
    <ligand>
        <name>L-glutamate</name>
        <dbReference type="ChEBI" id="CHEBI:29985"/>
    </ligand>
</feature>
<feature type="binding site" evidence="2">
    <location>
        <position position="245"/>
    </location>
    <ligand>
        <name>Mg(2+)</name>
        <dbReference type="ChEBI" id="CHEBI:18420"/>
        <label>1</label>
    </ligand>
</feature>
<feature type="binding site" evidence="4">
    <location>
        <begin position="247"/>
        <end position="249"/>
    </location>
    <ligand>
        <name>ATP</name>
        <dbReference type="ChEBI" id="CHEBI:30616"/>
    </ligand>
</feature>
<feature type="binding site" evidence="3">
    <location>
        <position position="249"/>
    </location>
    <ligand>
        <name>ATP</name>
        <dbReference type="ChEBI" id="CHEBI:30616"/>
    </ligand>
</feature>
<feature type="binding site" evidence="1">
    <location>
        <position position="298"/>
    </location>
    <ligand>
        <name>L-glutamate</name>
        <dbReference type="ChEBI" id="CHEBI:29985"/>
    </ligand>
</feature>
<feature type="binding site" evidence="1">
    <location>
        <position position="304"/>
    </location>
    <ligand>
        <name>L-glutamate</name>
        <dbReference type="ChEBI" id="CHEBI:29985"/>
    </ligand>
</feature>
<feature type="binding site" evidence="4">
    <location>
        <position position="316"/>
    </location>
    <ligand>
        <name>ATP</name>
        <dbReference type="ChEBI" id="CHEBI:30616"/>
    </ligand>
</feature>
<feature type="binding site" evidence="4">
    <location>
        <position position="316"/>
    </location>
    <ligand>
        <name>L-glutamate</name>
        <dbReference type="ChEBI" id="CHEBI:29985"/>
    </ligand>
</feature>
<feature type="binding site" evidence="4">
    <location>
        <position position="321"/>
    </location>
    <ligand>
        <name>ATP</name>
        <dbReference type="ChEBI" id="CHEBI:30616"/>
    </ligand>
</feature>
<feature type="binding site" evidence="2">
    <location>
        <position position="336"/>
    </location>
    <ligand>
        <name>Mg(2+)</name>
        <dbReference type="ChEBI" id="CHEBI:18420"/>
        <label>1</label>
    </ligand>
</feature>
<feature type="binding site" evidence="1">
    <location>
        <position position="338"/>
    </location>
    <ligand>
        <name>L-glutamate</name>
        <dbReference type="ChEBI" id="CHEBI:29985"/>
    </ligand>
</feature>
<feature type="site" description="Important for inhibition by glutamine" evidence="2">
    <location>
        <position position="61"/>
    </location>
</feature>
<evidence type="ECO:0000250" key="1">
    <source>
        <dbReference type="UniProtKB" id="P0A1P6"/>
    </source>
</evidence>
<evidence type="ECO:0000250" key="2">
    <source>
        <dbReference type="UniProtKB" id="P12425"/>
    </source>
</evidence>
<evidence type="ECO:0000250" key="3">
    <source>
        <dbReference type="UniProtKB" id="P77961"/>
    </source>
</evidence>
<evidence type="ECO:0000250" key="4">
    <source>
        <dbReference type="UniProtKB" id="P9WN39"/>
    </source>
</evidence>
<evidence type="ECO:0000255" key="5">
    <source>
        <dbReference type="PROSITE-ProRule" id="PRU01330"/>
    </source>
</evidence>
<evidence type="ECO:0000255" key="6">
    <source>
        <dbReference type="PROSITE-ProRule" id="PRU01331"/>
    </source>
</evidence>
<evidence type="ECO:0000305" key="7"/>
<comment type="function">
    <text evidence="2">Glutamine synthetase (GS) is an unusual multitasking protein that functions as an enzyme, a transcription coregulator, and a chaperone in ammonium assimilation and in the regulation of genes involved in nitrogen metabolism. It catalyzes the ATP-dependent biosynthesis of glutamine from glutamate and ammonia. Feedback-inhibited GlnA also interacts with and regulates the activity of the transcriptional regulator TnrA. During nitrogen limitation, TnrA is in its DNA-binding active state and turns on the transcription of genes required for nitrogen assimilation. Under conditions of nitrogen excess, feedback-inhibited GlnA forms a stable complex with TnrA, which inhibits its DNA-binding activity. In contrast, feedback-inhibited GlnA acts as a chaperone to stabilize the DNA-binding activity of GlnR, which represses the transcription of nitrogen assimilation genes.</text>
</comment>
<comment type="catalytic activity">
    <reaction evidence="2">
        <text>L-glutamate + NH4(+) + ATP = L-glutamine + ADP + phosphate + H(+)</text>
        <dbReference type="Rhea" id="RHEA:16169"/>
        <dbReference type="ChEBI" id="CHEBI:15378"/>
        <dbReference type="ChEBI" id="CHEBI:28938"/>
        <dbReference type="ChEBI" id="CHEBI:29985"/>
        <dbReference type="ChEBI" id="CHEBI:30616"/>
        <dbReference type="ChEBI" id="CHEBI:43474"/>
        <dbReference type="ChEBI" id="CHEBI:58359"/>
        <dbReference type="ChEBI" id="CHEBI:456216"/>
        <dbReference type="EC" id="6.3.1.2"/>
    </reaction>
</comment>
<comment type="cofactor">
    <cofactor evidence="2">
        <name>Mg(2+)</name>
        <dbReference type="ChEBI" id="CHEBI:18420"/>
    </cofactor>
    <text evidence="2">Binds 2 Mg(2+) ions per subunit.</text>
</comment>
<comment type="activity regulation">
    <text evidence="2">Inhibited by glutamine.</text>
</comment>
<comment type="subunit">
    <text evidence="2">Oligomer of 12 subunits arranged in the form of two hexagons. In its feedback-inhibited form, interacts with TnrA in order to block its DNA-binding activity.</text>
</comment>
<comment type="subcellular location">
    <subcellularLocation>
        <location evidence="2">Cytoplasm</location>
    </subcellularLocation>
</comment>
<comment type="similarity">
    <text evidence="7">Belongs to the glutamine synthetase family.</text>
</comment>
<reference key="1">
    <citation type="journal article" date="2002" name="J. Bacteriol.">
        <title>Whole-genome comparison of Mycobacterium tuberculosis clinical and laboratory strains.</title>
        <authorList>
            <person name="Fleischmann R.D."/>
            <person name="Alland D."/>
            <person name="Eisen J.A."/>
            <person name="Carpenter L."/>
            <person name="White O."/>
            <person name="Peterson J.D."/>
            <person name="DeBoy R.T."/>
            <person name="Dodson R.J."/>
            <person name="Gwinn M.L."/>
            <person name="Haft D.H."/>
            <person name="Hickey E.K."/>
            <person name="Kolonay J.F."/>
            <person name="Nelson W.C."/>
            <person name="Umayam L.A."/>
            <person name="Ermolaeva M.D."/>
            <person name="Salzberg S.L."/>
            <person name="Delcher A."/>
            <person name="Utterback T.R."/>
            <person name="Weidman J.F."/>
            <person name="Khouri H.M."/>
            <person name="Gill J."/>
            <person name="Mikula A."/>
            <person name="Bishai W."/>
            <person name="Jacobs W.R. Jr."/>
            <person name="Venter J.C."/>
            <person name="Fraser C.M."/>
        </authorList>
    </citation>
    <scope>NUCLEOTIDE SEQUENCE [LARGE SCALE GENOMIC DNA]</scope>
    <source>
        <strain>CDC 1551 / Oshkosh</strain>
    </source>
</reference>
<organism>
    <name type="scientific">Mycobacterium tuberculosis (strain CDC 1551 / Oshkosh)</name>
    <dbReference type="NCBI Taxonomy" id="83331"/>
    <lineage>
        <taxon>Bacteria</taxon>
        <taxon>Bacillati</taxon>
        <taxon>Actinomycetota</taxon>
        <taxon>Actinomycetes</taxon>
        <taxon>Mycobacteriales</taxon>
        <taxon>Mycobacteriaceae</taxon>
        <taxon>Mycobacterium</taxon>
        <taxon>Mycobacterium tuberculosis complex</taxon>
    </lineage>
</organism>
<proteinExistence type="inferred from homology"/>
<accession>P9WN36</accession>
<accession>L0T968</accession>
<accession>P64245</accession>
<accession>Q10378</accession>
<protein>
    <recommendedName>
        <fullName evidence="2">Glutamine synthetase</fullName>
        <shortName evidence="2">GS</shortName>
        <ecNumber evidence="2">6.3.1.2</ecNumber>
    </recommendedName>
    <alternativeName>
        <fullName evidence="2">Glutamate--ammonia ligase</fullName>
    </alternativeName>
    <alternativeName>
        <fullName evidence="2">Glutamine synthetase I alpha</fullName>
        <shortName evidence="2">GSI alpha</shortName>
    </alternativeName>
</protein>
<name>GLN1A_MYCTO</name>
<keyword id="KW-0067">ATP-binding</keyword>
<keyword id="KW-0963">Cytoplasm</keyword>
<keyword id="KW-0436">Ligase</keyword>
<keyword id="KW-0460">Magnesium</keyword>
<keyword id="KW-0479">Metal-binding</keyword>
<keyword id="KW-0547">Nucleotide-binding</keyword>
<keyword id="KW-1185">Reference proteome</keyword>